<dbReference type="EMBL" id="CP000305">
    <property type="protein sequence ID" value="ABG17266.1"/>
    <property type="molecule type" value="Genomic_DNA"/>
</dbReference>
<dbReference type="EMBL" id="ACNQ01000008">
    <property type="protein sequence ID" value="EEO77351.1"/>
    <property type="molecule type" value="Genomic_DNA"/>
</dbReference>
<dbReference type="RefSeq" id="WP_002208641.1">
    <property type="nucleotide sequence ID" value="NZ_ACNQ01000008.1"/>
</dbReference>
<dbReference type="SMR" id="Q1CL64"/>
<dbReference type="GeneID" id="96664466"/>
<dbReference type="KEGG" id="ypn:YPN_0934"/>
<dbReference type="HOGENOM" id="CLU_014218_8_2_6"/>
<dbReference type="Proteomes" id="UP000008936">
    <property type="component" value="Chromosome"/>
</dbReference>
<dbReference type="GO" id="GO:0009376">
    <property type="term" value="C:HslUV protease complex"/>
    <property type="evidence" value="ECO:0007669"/>
    <property type="project" value="TreeGrafter"/>
</dbReference>
<dbReference type="GO" id="GO:0005524">
    <property type="term" value="F:ATP binding"/>
    <property type="evidence" value="ECO:0007669"/>
    <property type="project" value="UniProtKB-UniRule"/>
</dbReference>
<dbReference type="GO" id="GO:0016887">
    <property type="term" value="F:ATP hydrolysis activity"/>
    <property type="evidence" value="ECO:0007669"/>
    <property type="project" value="InterPro"/>
</dbReference>
<dbReference type="GO" id="GO:0140662">
    <property type="term" value="F:ATP-dependent protein folding chaperone"/>
    <property type="evidence" value="ECO:0007669"/>
    <property type="project" value="InterPro"/>
</dbReference>
<dbReference type="GO" id="GO:0046983">
    <property type="term" value="F:protein dimerization activity"/>
    <property type="evidence" value="ECO:0007669"/>
    <property type="project" value="InterPro"/>
</dbReference>
<dbReference type="GO" id="GO:0051082">
    <property type="term" value="F:unfolded protein binding"/>
    <property type="evidence" value="ECO:0007669"/>
    <property type="project" value="UniProtKB-UniRule"/>
</dbReference>
<dbReference type="GO" id="GO:0008270">
    <property type="term" value="F:zinc ion binding"/>
    <property type="evidence" value="ECO:0007669"/>
    <property type="project" value="InterPro"/>
</dbReference>
<dbReference type="GO" id="GO:0051301">
    <property type="term" value="P:cell division"/>
    <property type="evidence" value="ECO:0007669"/>
    <property type="project" value="TreeGrafter"/>
</dbReference>
<dbReference type="GO" id="GO:0051603">
    <property type="term" value="P:proteolysis involved in protein catabolic process"/>
    <property type="evidence" value="ECO:0007669"/>
    <property type="project" value="TreeGrafter"/>
</dbReference>
<dbReference type="CDD" id="cd19497">
    <property type="entry name" value="RecA-like_ClpX"/>
    <property type="match status" value="1"/>
</dbReference>
<dbReference type="FunFam" id="1.10.8.60:FF:000002">
    <property type="entry name" value="ATP-dependent Clp protease ATP-binding subunit ClpX"/>
    <property type="match status" value="1"/>
</dbReference>
<dbReference type="FunFam" id="3.40.50.300:FF:000005">
    <property type="entry name" value="ATP-dependent Clp protease ATP-binding subunit ClpX"/>
    <property type="match status" value="1"/>
</dbReference>
<dbReference type="Gene3D" id="1.10.8.60">
    <property type="match status" value="1"/>
</dbReference>
<dbReference type="Gene3D" id="6.20.220.10">
    <property type="entry name" value="ClpX chaperone, C4-type zinc finger domain"/>
    <property type="match status" value="1"/>
</dbReference>
<dbReference type="Gene3D" id="3.40.50.300">
    <property type="entry name" value="P-loop containing nucleotide triphosphate hydrolases"/>
    <property type="match status" value="1"/>
</dbReference>
<dbReference type="HAMAP" id="MF_00175">
    <property type="entry name" value="ClpX"/>
    <property type="match status" value="1"/>
</dbReference>
<dbReference type="InterPro" id="IPR003593">
    <property type="entry name" value="AAA+_ATPase"/>
</dbReference>
<dbReference type="InterPro" id="IPR050052">
    <property type="entry name" value="ATP-dep_Clp_protease_ClpX"/>
</dbReference>
<dbReference type="InterPro" id="IPR003959">
    <property type="entry name" value="ATPase_AAA_core"/>
</dbReference>
<dbReference type="InterPro" id="IPR019489">
    <property type="entry name" value="Clp_ATPase_C"/>
</dbReference>
<dbReference type="InterPro" id="IPR004487">
    <property type="entry name" value="Clp_protease_ATP-bd_su_ClpX"/>
</dbReference>
<dbReference type="InterPro" id="IPR046425">
    <property type="entry name" value="ClpX_bact"/>
</dbReference>
<dbReference type="InterPro" id="IPR027417">
    <property type="entry name" value="P-loop_NTPase"/>
</dbReference>
<dbReference type="InterPro" id="IPR010603">
    <property type="entry name" value="Znf_CppX_C4"/>
</dbReference>
<dbReference type="InterPro" id="IPR038366">
    <property type="entry name" value="Znf_CppX_C4_sf"/>
</dbReference>
<dbReference type="NCBIfam" id="TIGR00382">
    <property type="entry name" value="clpX"/>
    <property type="match status" value="1"/>
</dbReference>
<dbReference type="NCBIfam" id="NF003745">
    <property type="entry name" value="PRK05342.1"/>
    <property type="match status" value="1"/>
</dbReference>
<dbReference type="PANTHER" id="PTHR48102:SF7">
    <property type="entry name" value="ATP-DEPENDENT CLP PROTEASE ATP-BINDING SUBUNIT CLPX-LIKE, MITOCHONDRIAL"/>
    <property type="match status" value="1"/>
</dbReference>
<dbReference type="PANTHER" id="PTHR48102">
    <property type="entry name" value="ATP-DEPENDENT CLP PROTEASE ATP-BINDING SUBUNIT CLPX-LIKE, MITOCHONDRIAL-RELATED"/>
    <property type="match status" value="1"/>
</dbReference>
<dbReference type="Pfam" id="PF07724">
    <property type="entry name" value="AAA_2"/>
    <property type="match status" value="1"/>
</dbReference>
<dbReference type="Pfam" id="PF10431">
    <property type="entry name" value="ClpB_D2-small"/>
    <property type="match status" value="1"/>
</dbReference>
<dbReference type="Pfam" id="PF06689">
    <property type="entry name" value="zf-C4_ClpX"/>
    <property type="match status" value="1"/>
</dbReference>
<dbReference type="SMART" id="SM00382">
    <property type="entry name" value="AAA"/>
    <property type="match status" value="1"/>
</dbReference>
<dbReference type="SMART" id="SM01086">
    <property type="entry name" value="ClpB_D2-small"/>
    <property type="match status" value="1"/>
</dbReference>
<dbReference type="SMART" id="SM00994">
    <property type="entry name" value="zf-C4_ClpX"/>
    <property type="match status" value="1"/>
</dbReference>
<dbReference type="SUPFAM" id="SSF57716">
    <property type="entry name" value="Glucocorticoid receptor-like (DNA-binding domain)"/>
    <property type="match status" value="1"/>
</dbReference>
<dbReference type="SUPFAM" id="SSF52540">
    <property type="entry name" value="P-loop containing nucleoside triphosphate hydrolases"/>
    <property type="match status" value="1"/>
</dbReference>
<dbReference type="PROSITE" id="PS51902">
    <property type="entry name" value="CLPX_ZB"/>
    <property type="match status" value="1"/>
</dbReference>
<sequence length="423" mass="46033">MTDKRKDGSGKLLYCSFCGKSQHEVRKLIAGPSVYICDECVDLCNDIIREEIKEVSPHRDRSSLPTPHEIRHHLDDYVIGQEPAKKVLAVAVYNHYKRLRNGDTSNGIELGKSNILLIGPTGSGKTLLAETLARLLDVPFTMADATTLTEAGYVGEDVENIIQKLLQKCDYDVQKAQRGIVYIDEIDKISRKSDNPSITRDVSGEGVQQALLKLIEGTIAAVPPQGGRKHPQQEFLQVDTSKILFICGGAFAGLDKVIGQRINTGSGIGFGAVVKGQSEKATEGELLSQVEPEDLIKFGLIPEFIGRLPVVATLSELSEDALIQILKEPKNALTKQYQALFSLEGVELEFRDEALTAIAKKAMARKTGARGLRSIVEGALLDTMYDLPSMDSVEKVVVDESVIAGQSAPMLIYGQPEAQASGE</sequence>
<evidence type="ECO:0000255" key="1">
    <source>
        <dbReference type="HAMAP-Rule" id="MF_00175"/>
    </source>
</evidence>
<evidence type="ECO:0000255" key="2">
    <source>
        <dbReference type="PROSITE-ProRule" id="PRU01250"/>
    </source>
</evidence>
<keyword id="KW-0067">ATP-binding</keyword>
<keyword id="KW-0143">Chaperone</keyword>
<keyword id="KW-0479">Metal-binding</keyword>
<keyword id="KW-0547">Nucleotide-binding</keyword>
<keyword id="KW-0862">Zinc</keyword>
<comment type="function">
    <text evidence="1">ATP-dependent specificity component of the Clp protease. It directs the protease to specific substrates. Can perform chaperone functions in the absence of ClpP.</text>
</comment>
<comment type="subunit">
    <text evidence="1">Component of the ClpX-ClpP complex. Forms a hexameric ring that, in the presence of ATP, binds to fourteen ClpP subunits assembled into a disk-like structure with a central cavity, resembling the structure of eukaryotic proteasomes.</text>
</comment>
<comment type="similarity">
    <text evidence="1">Belongs to the ClpX chaperone family.</text>
</comment>
<gene>
    <name evidence="1" type="primary">clpX</name>
    <name type="ordered locus">YPN_0934</name>
    <name type="ORF">YP516_1012</name>
</gene>
<name>CLPX_YERPN</name>
<protein>
    <recommendedName>
        <fullName evidence="1">ATP-dependent Clp protease ATP-binding subunit ClpX</fullName>
    </recommendedName>
</protein>
<accession>Q1CL64</accession>
<accession>C4GQL0</accession>
<organism>
    <name type="scientific">Yersinia pestis bv. Antiqua (strain Nepal516)</name>
    <dbReference type="NCBI Taxonomy" id="377628"/>
    <lineage>
        <taxon>Bacteria</taxon>
        <taxon>Pseudomonadati</taxon>
        <taxon>Pseudomonadota</taxon>
        <taxon>Gammaproteobacteria</taxon>
        <taxon>Enterobacterales</taxon>
        <taxon>Yersiniaceae</taxon>
        <taxon>Yersinia</taxon>
    </lineage>
</organism>
<reference key="1">
    <citation type="journal article" date="2006" name="J. Bacteriol.">
        <title>Complete genome sequence of Yersinia pestis strains Antiqua and Nepal516: evidence of gene reduction in an emerging pathogen.</title>
        <authorList>
            <person name="Chain P.S.G."/>
            <person name="Hu P."/>
            <person name="Malfatti S.A."/>
            <person name="Radnedge L."/>
            <person name="Larimer F."/>
            <person name="Vergez L.M."/>
            <person name="Worsham P."/>
            <person name="Chu M.C."/>
            <person name="Andersen G.L."/>
        </authorList>
    </citation>
    <scope>NUCLEOTIDE SEQUENCE [LARGE SCALE GENOMIC DNA]</scope>
    <source>
        <strain>Nepal516</strain>
    </source>
</reference>
<reference key="2">
    <citation type="submission" date="2009-04" db="EMBL/GenBank/DDBJ databases">
        <title>Yersinia pestis Nepal516A whole genome shotgun sequencing project.</title>
        <authorList>
            <person name="Plunkett G. III"/>
            <person name="Anderson B.D."/>
            <person name="Baumler D.J."/>
            <person name="Burland V."/>
            <person name="Cabot E.L."/>
            <person name="Glasner J.D."/>
            <person name="Mau B."/>
            <person name="Neeno-Eckwall E."/>
            <person name="Perna N.T."/>
            <person name="Munk A.C."/>
            <person name="Tapia R."/>
            <person name="Green L.D."/>
            <person name="Rogers Y.C."/>
            <person name="Detter J.C."/>
            <person name="Bruce D.C."/>
            <person name="Brettin T.S."/>
        </authorList>
    </citation>
    <scope>NUCLEOTIDE SEQUENCE [LARGE SCALE GENOMIC DNA]</scope>
    <source>
        <strain>Nepal516</strain>
    </source>
</reference>
<feature type="chain" id="PRO_1000024706" description="ATP-dependent Clp protease ATP-binding subunit ClpX">
    <location>
        <begin position="1"/>
        <end position="423"/>
    </location>
</feature>
<feature type="domain" description="ClpX-type ZB" evidence="2">
    <location>
        <begin position="2"/>
        <end position="56"/>
    </location>
</feature>
<feature type="binding site" evidence="2">
    <location>
        <position position="15"/>
    </location>
    <ligand>
        <name>Zn(2+)</name>
        <dbReference type="ChEBI" id="CHEBI:29105"/>
    </ligand>
</feature>
<feature type="binding site" evidence="2">
    <location>
        <position position="18"/>
    </location>
    <ligand>
        <name>Zn(2+)</name>
        <dbReference type="ChEBI" id="CHEBI:29105"/>
    </ligand>
</feature>
<feature type="binding site" evidence="2">
    <location>
        <position position="37"/>
    </location>
    <ligand>
        <name>Zn(2+)</name>
        <dbReference type="ChEBI" id="CHEBI:29105"/>
    </ligand>
</feature>
<feature type="binding site" evidence="2">
    <location>
        <position position="40"/>
    </location>
    <ligand>
        <name>Zn(2+)</name>
        <dbReference type="ChEBI" id="CHEBI:29105"/>
    </ligand>
</feature>
<feature type="binding site" evidence="1">
    <location>
        <begin position="120"/>
        <end position="127"/>
    </location>
    <ligand>
        <name>ATP</name>
        <dbReference type="ChEBI" id="CHEBI:30616"/>
    </ligand>
</feature>
<proteinExistence type="inferred from homology"/>